<dbReference type="EC" id="3.4.21.-" evidence="7"/>
<dbReference type="EMBL" id="AB010074">
    <property type="protein sequence ID" value="BAB11244.1"/>
    <property type="molecule type" value="Genomic_DNA"/>
</dbReference>
<dbReference type="EMBL" id="CP002688">
    <property type="protein sequence ID" value="AED96122.1"/>
    <property type="molecule type" value="Genomic_DNA"/>
</dbReference>
<dbReference type="EMBL" id="AY080831">
    <property type="protein sequence ID" value="AAL87307.1"/>
    <property type="molecule type" value="mRNA"/>
</dbReference>
<dbReference type="RefSeq" id="NP_568765.1">
    <property type="nucleotide sequence ID" value="NM_124554.3"/>
</dbReference>
<dbReference type="SMR" id="Q9FLI4"/>
<dbReference type="FunCoup" id="Q9FLI4">
    <property type="interactions" value="226"/>
</dbReference>
<dbReference type="STRING" id="3702.Q9FLI4"/>
<dbReference type="MEROPS" id="S08.A25"/>
<dbReference type="GlyCosmos" id="Q9FLI4">
    <property type="glycosylation" value="4 sites, No reported glycans"/>
</dbReference>
<dbReference type="GlyGen" id="Q9FLI4">
    <property type="glycosylation" value="4 sites"/>
</dbReference>
<dbReference type="PaxDb" id="3702-AT5G51750.1"/>
<dbReference type="ProteomicsDB" id="232764"/>
<dbReference type="EnsemblPlants" id="AT5G51750.1">
    <property type="protein sequence ID" value="AT5G51750.1"/>
    <property type="gene ID" value="AT5G51750"/>
</dbReference>
<dbReference type="GeneID" id="835249"/>
<dbReference type="Gramene" id="AT5G51750.1">
    <property type="protein sequence ID" value="AT5G51750.1"/>
    <property type="gene ID" value="AT5G51750"/>
</dbReference>
<dbReference type="KEGG" id="ath:AT5G51750"/>
<dbReference type="Araport" id="AT5G51750"/>
<dbReference type="TAIR" id="AT5G51750">
    <property type="gene designation" value="SBT1.3"/>
</dbReference>
<dbReference type="eggNOG" id="ENOG502R0K0">
    <property type="taxonomic scope" value="Eukaryota"/>
</dbReference>
<dbReference type="HOGENOM" id="CLU_000625_4_6_1"/>
<dbReference type="InParanoid" id="Q9FLI4"/>
<dbReference type="OMA" id="HSNRTCK"/>
<dbReference type="PhylomeDB" id="Q9FLI4"/>
<dbReference type="PRO" id="PR:Q9FLI4"/>
<dbReference type="Proteomes" id="UP000006548">
    <property type="component" value="Chromosome 5"/>
</dbReference>
<dbReference type="ExpressionAtlas" id="Q9FLI4">
    <property type="expression patterns" value="baseline and differential"/>
</dbReference>
<dbReference type="GO" id="GO:0005576">
    <property type="term" value="C:extracellular region"/>
    <property type="evidence" value="ECO:0007669"/>
    <property type="project" value="UniProtKB-SubCell"/>
</dbReference>
<dbReference type="GO" id="GO:0004252">
    <property type="term" value="F:serine-type endopeptidase activity"/>
    <property type="evidence" value="ECO:0007669"/>
    <property type="project" value="InterPro"/>
</dbReference>
<dbReference type="GO" id="GO:0006508">
    <property type="term" value="P:proteolysis"/>
    <property type="evidence" value="ECO:0007669"/>
    <property type="project" value="UniProtKB-KW"/>
</dbReference>
<dbReference type="CDD" id="cd02120">
    <property type="entry name" value="PA_subtilisin_like"/>
    <property type="match status" value="1"/>
</dbReference>
<dbReference type="CDD" id="cd04852">
    <property type="entry name" value="Peptidases_S8_3"/>
    <property type="match status" value="1"/>
</dbReference>
<dbReference type="FunFam" id="3.40.50.200:FF:000006">
    <property type="entry name" value="Subtilisin-like protease SBT1.5"/>
    <property type="match status" value="1"/>
</dbReference>
<dbReference type="FunFam" id="3.50.30.30:FF:000005">
    <property type="entry name" value="subtilisin-like protease SBT1.5"/>
    <property type="match status" value="1"/>
</dbReference>
<dbReference type="FunFam" id="3.30.70.80:FF:000003">
    <property type="entry name" value="Subtilisin-like protease SBT1.9"/>
    <property type="match status" value="1"/>
</dbReference>
<dbReference type="Gene3D" id="2.60.40.2310">
    <property type="match status" value="1"/>
</dbReference>
<dbReference type="Gene3D" id="3.50.30.30">
    <property type="match status" value="1"/>
</dbReference>
<dbReference type="Gene3D" id="3.30.70.80">
    <property type="entry name" value="Peptidase S8 propeptide/proteinase inhibitor I9"/>
    <property type="match status" value="1"/>
</dbReference>
<dbReference type="Gene3D" id="3.40.50.200">
    <property type="entry name" value="Peptidase S8/S53 domain"/>
    <property type="match status" value="1"/>
</dbReference>
<dbReference type="InterPro" id="IPR003137">
    <property type="entry name" value="PA_domain"/>
</dbReference>
<dbReference type="InterPro" id="IPR000209">
    <property type="entry name" value="Peptidase_S8/S53_dom"/>
</dbReference>
<dbReference type="InterPro" id="IPR036852">
    <property type="entry name" value="Peptidase_S8/S53_dom_sf"/>
</dbReference>
<dbReference type="InterPro" id="IPR023828">
    <property type="entry name" value="Peptidase_S8_Ser-AS"/>
</dbReference>
<dbReference type="InterPro" id="IPR015500">
    <property type="entry name" value="Peptidase_S8_subtilisin-rel"/>
</dbReference>
<dbReference type="InterPro" id="IPR034197">
    <property type="entry name" value="Peptidases_S8_3"/>
</dbReference>
<dbReference type="InterPro" id="IPR010259">
    <property type="entry name" value="S8pro/Inhibitor_I9"/>
</dbReference>
<dbReference type="InterPro" id="IPR037045">
    <property type="entry name" value="S8pro/Inhibitor_I9_sf"/>
</dbReference>
<dbReference type="InterPro" id="IPR045051">
    <property type="entry name" value="SBT"/>
</dbReference>
<dbReference type="InterPro" id="IPR041469">
    <property type="entry name" value="Subtilisin-like_FN3"/>
</dbReference>
<dbReference type="PANTHER" id="PTHR10795">
    <property type="entry name" value="PROPROTEIN CONVERTASE SUBTILISIN/KEXIN"/>
    <property type="match status" value="1"/>
</dbReference>
<dbReference type="Pfam" id="PF17766">
    <property type="entry name" value="fn3_6"/>
    <property type="match status" value="1"/>
</dbReference>
<dbReference type="Pfam" id="PF05922">
    <property type="entry name" value="Inhibitor_I9"/>
    <property type="match status" value="1"/>
</dbReference>
<dbReference type="Pfam" id="PF02225">
    <property type="entry name" value="PA"/>
    <property type="match status" value="1"/>
</dbReference>
<dbReference type="Pfam" id="PF00082">
    <property type="entry name" value="Peptidase_S8"/>
    <property type="match status" value="1"/>
</dbReference>
<dbReference type="PRINTS" id="PR00723">
    <property type="entry name" value="SUBTILISIN"/>
</dbReference>
<dbReference type="SUPFAM" id="SSF52743">
    <property type="entry name" value="Subtilisin-like"/>
    <property type="match status" value="1"/>
</dbReference>
<dbReference type="PROSITE" id="PS51892">
    <property type="entry name" value="SUBTILASE"/>
    <property type="match status" value="1"/>
</dbReference>
<dbReference type="PROSITE" id="PS00138">
    <property type="entry name" value="SUBTILASE_SER"/>
    <property type="match status" value="1"/>
</dbReference>
<proteinExistence type="evidence at transcript level"/>
<comment type="subcellular location">
    <subcellularLocation>
        <location evidence="2">Secreted</location>
    </subcellularLocation>
</comment>
<comment type="similarity">
    <text evidence="9">Belongs to the peptidase S8 family.</text>
</comment>
<protein>
    <recommendedName>
        <fullName evidence="8">Subtilisin-like protease SBT1.3</fullName>
        <ecNumber evidence="7">3.4.21.-</ecNumber>
    </recommendedName>
    <alternativeName>
        <fullName evidence="8">Subtilase subfamily 1 member 3</fullName>
        <shortName evidence="8">AtSBT1.3</shortName>
    </alternativeName>
</protein>
<sequence>MANKNPLQKPFLFIILSINLIFLQAETTTQISTKKTYVIHMDKSAMPLPYTNHLQWYSSKINSVTQHKSQEEEGNNNRILYTYQTAFHGLAAQLTQEEAERLEEEDGVVAVIPETRYELHTTRSPTFLGLERQESERVWAERVTDHDVVVGVLDTGIWPESESFNDTGMSPVPATWRGACETGKRFLKRNCNRKIVGARVFYRGYEAATGKIDEELEYKSPRDRDGHGTHTAATVAGSPVKGANLFGFAYGTARGMAQKARVAAYKVCWVGGCFSSDILSAVDQAVADGVQVLSISLGGGVSTYSRDSLSIATFGAMEMGVFVSCSAGNGGPDPISLTNVSPWITTVGASTMDRDFPATVKIGTMRTFKGVSLYKGRTVLPKNKQYPLVYLGRNASSPDPTSFCLDGALDRRHVAGKIVICDRGVTPRVQKGQVVKRAGGIGMVLTNTATNGEELVADSHMLPAVAVGEKEGKLIKQYAMTSKKATASLEILGTRIGIKPSPVVAAFSSRGPNFLSLEILKPDLLAPGVNILAAWTGDMAPSSLSSDPRRVKFNILSGTSMSCPHVSGVAALIKSRHPDWSPAAIKSALMTTAYVHDNMFKPLTDASGAAPSSPYDHGAGHIDPLRATDPGLVYDIGPQEYFEFLCTQDLSPSQLKVFTKHSNRTCKHTLAKNPGNLNYPAISALFPENTHVKAMTLRRTVTNVGPHISSYKVSVSPFKGASVTVQPKTLNFTSKHQKLSYTVTFRTRFRMKRPEFGGLVWKSTTHKVRSPVIITWLPPL</sequence>
<keyword id="KW-0068">Autocatalytic cleavage</keyword>
<keyword id="KW-0325">Glycoprotein</keyword>
<keyword id="KW-0378">Hydrolase</keyword>
<keyword id="KW-0645">Protease</keyword>
<keyword id="KW-1185">Reference proteome</keyword>
<keyword id="KW-0964">Secreted</keyword>
<keyword id="KW-0720">Serine protease</keyword>
<keyword id="KW-0732">Signal</keyword>
<keyword id="KW-0865">Zymogen</keyword>
<evidence type="ECO:0000250" key="1">
    <source>
        <dbReference type="UniProtKB" id="Q39547"/>
    </source>
</evidence>
<evidence type="ECO:0000250" key="2">
    <source>
        <dbReference type="UniProtKB" id="Q84WS0"/>
    </source>
</evidence>
<evidence type="ECO:0000250" key="3">
    <source>
        <dbReference type="UniProtKB" id="Q9MAP7"/>
    </source>
</evidence>
<evidence type="ECO:0000255" key="4"/>
<evidence type="ECO:0000255" key="5">
    <source>
        <dbReference type="PROSITE-ProRule" id="PRU00498"/>
    </source>
</evidence>
<evidence type="ECO:0000255" key="6">
    <source>
        <dbReference type="PROSITE-ProRule" id="PRU01240"/>
    </source>
</evidence>
<evidence type="ECO:0000255" key="7">
    <source>
        <dbReference type="PROSITE-ProRule" id="PRU10082"/>
    </source>
</evidence>
<evidence type="ECO:0000303" key="8">
    <source>
    </source>
</evidence>
<evidence type="ECO:0000305" key="9"/>
<evidence type="ECO:0000312" key="10">
    <source>
        <dbReference type="Araport" id="AT5G51750"/>
    </source>
</evidence>
<evidence type="ECO:0000312" key="11">
    <source>
        <dbReference type="EMBL" id="BAB11244.1"/>
    </source>
</evidence>
<organism>
    <name type="scientific">Arabidopsis thaliana</name>
    <name type="common">Mouse-ear cress</name>
    <dbReference type="NCBI Taxonomy" id="3702"/>
    <lineage>
        <taxon>Eukaryota</taxon>
        <taxon>Viridiplantae</taxon>
        <taxon>Streptophyta</taxon>
        <taxon>Embryophyta</taxon>
        <taxon>Tracheophyta</taxon>
        <taxon>Spermatophyta</taxon>
        <taxon>Magnoliopsida</taxon>
        <taxon>eudicotyledons</taxon>
        <taxon>Gunneridae</taxon>
        <taxon>Pentapetalae</taxon>
        <taxon>rosids</taxon>
        <taxon>malvids</taxon>
        <taxon>Brassicales</taxon>
        <taxon>Brassicaceae</taxon>
        <taxon>Camelineae</taxon>
        <taxon>Arabidopsis</taxon>
    </lineage>
</organism>
<name>SBT13_ARATH</name>
<gene>
    <name evidence="8" type="primary">SBT1.3</name>
    <name evidence="10" type="ordered locus">At5g51750</name>
    <name evidence="11" type="ORF">MIO24.12</name>
</gene>
<reference key="1">
    <citation type="journal article" date="1998" name="DNA Res.">
        <title>Structural analysis of Arabidopsis thaliana chromosome 5. IV. Sequence features of the regions of 1,456,315 bp covered by nineteen physically assigned P1 and TAC clones.</title>
        <authorList>
            <person name="Sato S."/>
            <person name="Kaneko T."/>
            <person name="Kotani H."/>
            <person name="Nakamura Y."/>
            <person name="Asamizu E."/>
            <person name="Miyajima N."/>
            <person name="Tabata S."/>
        </authorList>
    </citation>
    <scope>NUCLEOTIDE SEQUENCE [LARGE SCALE GENOMIC DNA]</scope>
    <source>
        <strain>cv. Columbia</strain>
    </source>
</reference>
<reference key="2">
    <citation type="journal article" date="2017" name="Plant J.">
        <title>Araport11: a complete reannotation of the Arabidopsis thaliana reference genome.</title>
        <authorList>
            <person name="Cheng C.Y."/>
            <person name="Krishnakumar V."/>
            <person name="Chan A.P."/>
            <person name="Thibaud-Nissen F."/>
            <person name="Schobel S."/>
            <person name="Town C.D."/>
        </authorList>
    </citation>
    <scope>GENOME REANNOTATION</scope>
    <source>
        <strain>cv. Columbia</strain>
    </source>
</reference>
<reference key="3">
    <citation type="journal article" date="2003" name="Science">
        <title>Empirical analysis of transcriptional activity in the Arabidopsis genome.</title>
        <authorList>
            <person name="Yamada K."/>
            <person name="Lim J."/>
            <person name="Dale J.M."/>
            <person name="Chen H."/>
            <person name="Shinn P."/>
            <person name="Palm C.J."/>
            <person name="Southwick A.M."/>
            <person name="Wu H.C."/>
            <person name="Kim C.J."/>
            <person name="Nguyen M."/>
            <person name="Pham P.K."/>
            <person name="Cheuk R.F."/>
            <person name="Karlin-Newmann G."/>
            <person name="Liu S.X."/>
            <person name="Lam B."/>
            <person name="Sakano H."/>
            <person name="Wu T."/>
            <person name="Yu G."/>
            <person name="Miranda M."/>
            <person name="Quach H.L."/>
            <person name="Tripp M."/>
            <person name="Chang C.H."/>
            <person name="Lee J.M."/>
            <person name="Toriumi M.J."/>
            <person name="Chan M.M."/>
            <person name="Tang C.C."/>
            <person name="Onodera C.S."/>
            <person name="Deng J.M."/>
            <person name="Akiyama K."/>
            <person name="Ansari Y."/>
            <person name="Arakawa T."/>
            <person name="Banh J."/>
            <person name="Banno F."/>
            <person name="Bowser L."/>
            <person name="Brooks S.Y."/>
            <person name="Carninci P."/>
            <person name="Chao Q."/>
            <person name="Choy N."/>
            <person name="Enju A."/>
            <person name="Goldsmith A.D."/>
            <person name="Gurjal M."/>
            <person name="Hansen N.F."/>
            <person name="Hayashizaki Y."/>
            <person name="Johnson-Hopson C."/>
            <person name="Hsuan V.W."/>
            <person name="Iida K."/>
            <person name="Karnes M."/>
            <person name="Khan S."/>
            <person name="Koesema E."/>
            <person name="Ishida J."/>
            <person name="Jiang P.X."/>
            <person name="Jones T."/>
            <person name="Kawai J."/>
            <person name="Kamiya A."/>
            <person name="Meyers C."/>
            <person name="Nakajima M."/>
            <person name="Narusaka M."/>
            <person name="Seki M."/>
            <person name="Sakurai T."/>
            <person name="Satou M."/>
            <person name="Tamse R."/>
            <person name="Vaysberg M."/>
            <person name="Wallender E.K."/>
            <person name="Wong C."/>
            <person name="Yamamura Y."/>
            <person name="Yuan S."/>
            <person name="Shinozaki K."/>
            <person name="Davis R.W."/>
            <person name="Theologis A."/>
            <person name="Ecker J.R."/>
        </authorList>
    </citation>
    <scope>NUCLEOTIDE SEQUENCE [LARGE SCALE MRNA]</scope>
    <source>
        <strain>cv. Columbia</strain>
    </source>
</reference>
<reference key="4">
    <citation type="journal article" date="2005" name="PLoS Comput. Biol.">
        <title>Inferring hypotheses on functional relationships of genes: Analysis of the Arabidopsis thaliana subtilase gene family.</title>
        <authorList>
            <person name="Rautengarten C."/>
            <person name="Steinhauser D."/>
            <person name="Bussis D."/>
            <person name="Stintzi A."/>
            <person name="Schaller A."/>
            <person name="Kopka J."/>
            <person name="Altmann T."/>
        </authorList>
    </citation>
    <scope>GENE FAMILY</scope>
    <scope>NOMENCLATURE</scope>
</reference>
<accession>Q9FLI4</accession>
<feature type="signal peptide" evidence="4">
    <location>
        <begin position="1"/>
        <end position="25"/>
    </location>
</feature>
<feature type="propeptide" id="PRO_0000435170" description="Activation peptide" evidence="3">
    <location>
        <begin position="26"/>
        <end position="120"/>
    </location>
</feature>
<feature type="chain" id="PRO_5004326092" description="Subtilisin-like protease SBT1.3">
    <location>
        <begin position="121"/>
        <end status="unknown"/>
    </location>
</feature>
<feature type="propeptide" id="PRO_0000435171" evidence="1">
    <location>
        <begin status="unknown"/>
        <end position="780"/>
    </location>
</feature>
<feature type="domain" description="Inhibitor I9" evidence="4">
    <location>
        <begin position="36"/>
        <end position="120"/>
    </location>
</feature>
<feature type="domain" description="Peptidase S8" evidence="6">
    <location>
        <begin position="116"/>
        <end position="628"/>
    </location>
</feature>
<feature type="domain" description="PA" evidence="4">
    <location>
        <begin position="384"/>
        <end position="477"/>
    </location>
</feature>
<feature type="active site" description="Charge relay system" evidence="6">
    <location>
        <position position="154"/>
    </location>
</feature>
<feature type="active site" description="Charge relay system" evidence="6">
    <location>
        <position position="227"/>
    </location>
</feature>
<feature type="active site" description="Charge relay system" evidence="6">
    <location>
        <position position="560"/>
    </location>
</feature>
<feature type="glycosylation site" description="N-linked (GlcNAc...) asparagine" evidence="5">
    <location>
        <position position="165"/>
    </location>
</feature>
<feature type="glycosylation site" description="N-linked (GlcNAc...) asparagine" evidence="5">
    <location>
        <position position="394"/>
    </location>
</feature>
<feature type="glycosylation site" description="N-linked (GlcNAc...) asparagine" evidence="5">
    <location>
        <position position="663"/>
    </location>
</feature>
<feature type="glycosylation site" description="N-linked (GlcNAc...) asparagine" evidence="5">
    <location>
        <position position="731"/>
    </location>
</feature>